<proteinExistence type="evidence at protein level"/>
<keyword id="KW-0002">3D-structure</keyword>
<keyword id="KW-0010">Activator</keyword>
<keyword id="KW-0217">Developmental protein</keyword>
<keyword id="KW-0225">Disease variant</keyword>
<keyword id="KW-0238">DNA-binding</keyword>
<keyword id="KW-1017">Isopeptide bond</keyword>
<keyword id="KW-0488">Methylation</keyword>
<keyword id="KW-0539">Nucleus</keyword>
<keyword id="KW-0597">Phosphoprotein</keyword>
<keyword id="KW-1267">Proteomics identification</keyword>
<keyword id="KW-1185">Reference proteome</keyword>
<keyword id="KW-0804">Transcription</keyword>
<keyword id="KW-0805">Transcription regulation</keyword>
<keyword id="KW-0832">Ubl conjugation</keyword>
<feature type="chain" id="PRO_0000091808" description="Forkhead box protein C2">
    <location>
        <begin position="1"/>
        <end position="501"/>
    </location>
</feature>
<feature type="DNA-binding region" description="Fork-head" evidence="2">
    <location>
        <begin position="71"/>
        <end position="162"/>
    </location>
</feature>
<feature type="region of interest" description="Disordered" evidence="3">
    <location>
        <begin position="167"/>
        <end position="208"/>
    </location>
</feature>
<feature type="region of interest" description="Disordered" evidence="3">
    <location>
        <begin position="232"/>
        <end position="268"/>
    </location>
</feature>
<feature type="region of interest" description="Disordered" evidence="3">
    <location>
        <begin position="383"/>
        <end position="420"/>
    </location>
</feature>
<feature type="compositionally biased region" description="Basic and acidic residues" evidence="3">
    <location>
        <begin position="171"/>
        <end position="185"/>
    </location>
</feature>
<feature type="compositionally biased region" description="Polar residues" evidence="3">
    <location>
        <begin position="232"/>
        <end position="249"/>
    </location>
</feature>
<feature type="compositionally biased region" description="Basic residues" evidence="3">
    <location>
        <begin position="386"/>
        <end position="397"/>
    </location>
</feature>
<feature type="compositionally biased region" description="Pro residues" evidence="3">
    <location>
        <begin position="398"/>
        <end position="413"/>
    </location>
</feature>
<feature type="modified residue" description="Phosphoserine" evidence="13 17">
    <location>
        <position position="215"/>
    </location>
</feature>
<feature type="modified residue" description="Phosphoserine" evidence="7 13 14 17">
    <location>
        <position position="219"/>
    </location>
</feature>
<feature type="modified residue" description="Phosphoserine" evidence="7 13 15 17">
    <location>
        <position position="232"/>
    </location>
</feature>
<feature type="modified residue" description="Phosphoserine" evidence="12">
    <location>
        <position position="235"/>
    </location>
</feature>
<feature type="modified residue" description="Phosphoserine" evidence="7 11 12 13 15 16 17">
    <location>
        <position position="240"/>
    </location>
</feature>
<feature type="modified residue" description="Phosphothreonine" evidence="7">
    <location>
        <position position="247"/>
    </location>
</feature>
<feature type="modified residue" description="Phosphoserine" evidence="7">
    <location>
        <position position="251"/>
    </location>
</feature>
<feature type="modified residue" description="Omega-N-methylarginine" evidence="1">
    <location>
        <position position="279"/>
    </location>
</feature>
<feature type="modified residue" description="Phosphoserine" evidence="7">
    <location>
        <position position="281"/>
    </location>
</feature>
<feature type="modified residue" description="Phosphoserine" evidence="7 13 17">
    <location>
        <position position="288"/>
    </location>
</feature>
<feature type="modified residue" description="Omega-N-methylarginine" evidence="1">
    <location>
        <position position="293"/>
    </location>
</feature>
<feature type="modified residue" description="Phosphoserine" evidence="7">
    <location>
        <position position="367"/>
    </location>
</feature>
<feature type="modified residue" description="Asymmetric dimethylarginine" evidence="1">
    <location>
        <position position="458"/>
    </location>
</feature>
<feature type="cross-link" description="Glycyl lysine isopeptide (Lys-Gly) (interchain with G-Cter in SUMO2)" evidence="19">
    <location>
        <position position="184"/>
    </location>
</feature>
<feature type="cross-link" description="Glycyl lysine isopeptide (Lys-Gly) (interchain with G-Cter in SUMO2)" evidence="18 19">
    <location>
        <position position="214"/>
    </location>
</feature>
<feature type="sequence variant" id="VAR_018418" description="In LPHDST; dbSNP:rs121909106." evidence="6">
    <original>S</original>
    <variation>L</variation>
    <location>
        <position position="125"/>
    </location>
</feature>
<feature type="sequence variant" id="VAR_060950" description="In dbSNP:rs78018668." evidence="10">
    <original>S</original>
    <variation>F</variation>
    <location>
        <position position="191"/>
    </location>
</feature>
<feature type="helix" evidence="21">
    <location>
        <begin position="77"/>
        <end position="87"/>
    </location>
</feature>
<feature type="strand" evidence="22">
    <location>
        <begin position="88"/>
        <end position="91"/>
    </location>
</feature>
<feature type="helix" evidence="21">
    <location>
        <begin position="95"/>
        <end position="105"/>
    </location>
</feature>
<feature type="helix" evidence="21">
    <location>
        <begin position="107"/>
        <end position="110"/>
    </location>
</feature>
<feature type="helix" evidence="21">
    <location>
        <begin position="113"/>
        <end position="126"/>
    </location>
</feature>
<feature type="strand" evidence="21">
    <location>
        <begin position="130"/>
        <end position="133"/>
    </location>
</feature>
<feature type="strand" evidence="20">
    <location>
        <begin position="140"/>
        <end position="143"/>
    </location>
</feature>
<feature type="strand" evidence="21">
    <location>
        <begin position="145"/>
        <end position="148"/>
    </location>
</feature>
<feature type="helix" evidence="21">
    <location>
        <begin position="150"/>
        <end position="152"/>
    </location>
</feature>
<feature type="strand" evidence="21">
    <location>
        <begin position="159"/>
        <end position="163"/>
    </location>
</feature>
<reference key="1">
    <citation type="journal article" date="1997" name="Genomics">
        <title>Isolation of the mouse (MFH-1) and human (FKHL 14) mesenchyme fork head-1 genes reveals conservation of their gene and protein structures.</title>
        <authorList>
            <person name="Miura N."/>
            <person name="Iida K."/>
            <person name="Kakinuma H."/>
            <person name="Yang X.-L."/>
            <person name="Sugiyama T."/>
        </authorList>
    </citation>
    <scope>NUCLEOTIDE SEQUENCE [GENOMIC DNA]</scope>
    <scope>FUNCTION</scope>
</reference>
<reference key="2">
    <citation type="submission" date="2009-06" db="EMBL/GenBank/DDBJ databases">
        <authorList>
            <consortium name="NIEHS SNPs program"/>
        </authorList>
    </citation>
    <scope>NUCLEOTIDE SEQUENCE [GENOMIC DNA]</scope>
    <scope>VARIANT PHE-191</scope>
</reference>
<reference key="3">
    <citation type="journal article" date="2004" name="Genome Res.">
        <title>The status, quality, and expansion of the NIH full-length cDNA project: the Mammalian Gene Collection (MGC).</title>
        <authorList>
            <consortium name="The MGC Project Team"/>
        </authorList>
    </citation>
    <scope>NUCLEOTIDE SEQUENCE [LARGE SCALE MRNA]</scope>
</reference>
<reference key="4">
    <citation type="journal article" date="2000" name="Am. J. Hum. Genet.">
        <title>Mutations in FOXC2 (MFH-1), a forkhead family transcription factor, are responsible for the hereditary lymphedema-distichiasis syndrome.</title>
        <authorList>
            <person name="Fang J."/>
            <person name="Dagenais S.L."/>
            <person name="Erickson R.P."/>
            <person name="Arlt M.F."/>
            <person name="Glynn M.W."/>
            <person name="Gorski J.L."/>
            <person name="Seaver L.H."/>
            <person name="Glover T.W."/>
        </authorList>
    </citation>
    <scope>INVOLVEMENT IN LYD</scope>
</reference>
<reference key="5">
    <citation type="journal article" date="2001" name="Hum. Mol. Genet.">
        <title>Truncating mutations in FOXC2 cause multiple lymphedema syndromes.</title>
        <authorList>
            <person name="Finegold D.N."/>
            <person name="Kimak M.A."/>
            <person name="Lawrence E.C."/>
            <person name="Levinson K.L."/>
            <person name="Cherniske E.M."/>
            <person name="Pober B.R."/>
            <person name="Dunlap J.W."/>
            <person name="Ferrell R.E."/>
        </authorList>
    </citation>
    <scope>INVOLVEMENT IN LYD</scope>
</reference>
<reference key="6">
    <citation type="journal article" date="2006" name="Cell">
        <title>Global, in vivo, and site-specific phosphorylation dynamics in signaling networks.</title>
        <authorList>
            <person name="Olsen J.V."/>
            <person name="Blagoev B."/>
            <person name="Gnad F."/>
            <person name="Macek B."/>
            <person name="Kumar C."/>
            <person name="Mortensen P."/>
            <person name="Mann M."/>
        </authorList>
    </citation>
    <scope>PHOSPHORYLATION [LARGE SCALE ANALYSIS] AT SER-240</scope>
    <scope>IDENTIFICATION BY MASS SPECTROMETRY [LARGE SCALE ANALYSIS]</scope>
    <source>
        <tissue>Cervix carcinoma</tissue>
    </source>
</reference>
<reference key="7">
    <citation type="journal article" date="2008" name="J. Proteome Res.">
        <title>Combining protein-based IMAC, peptide-based IMAC, and MudPIT for efficient phosphoproteomic analysis.</title>
        <authorList>
            <person name="Cantin G.T."/>
            <person name="Yi W."/>
            <person name="Lu B."/>
            <person name="Park S.K."/>
            <person name="Xu T."/>
            <person name="Lee J.-D."/>
            <person name="Yates J.R. III"/>
        </authorList>
    </citation>
    <scope>PHOSPHORYLATION [LARGE SCALE ANALYSIS] AT SER-235 AND SER-240</scope>
    <scope>IDENTIFICATION BY MASS SPECTROMETRY [LARGE SCALE ANALYSIS]</scope>
    <source>
        <tissue>Cervix carcinoma</tissue>
    </source>
</reference>
<reference key="8">
    <citation type="journal article" date="2008" name="Mol. Cell">
        <title>Kinase-selective enrichment enables quantitative phosphoproteomics of the kinome across the cell cycle.</title>
        <authorList>
            <person name="Daub H."/>
            <person name="Olsen J.V."/>
            <person name="Bairlein M."/>
            <person name="Gnad F."/>
            <person name="Oppermann F.S."/>
            <person name="Korner R."/>
            <person name="Greff Z."/>
            <person name="Keri G."/>
            <person name="Stemmann O."/>
            <person name="Mann M."/>
        </authorList>
    </citation>
    <scope>PHOSPHORYLATION [LARGE SCALE ANALYSIS] AT SER-219</scope>
    <scope>IDENTIFICATION BY MASS SPECTROMETRY [LARGE SCALE ANALYSIS]</scope>
    <source>
        <tissue>Cervix carcinoma</tissue>
    </source>
</reference>
<reference key="9">
    <citation type="journal article" date="2008" name="Proc. Natl. Acad. Sci. U.S.A.">
        <title>A quantitative atlas of mitotic phosphorylation.</title>
        <authorList>
            <person name="Dephoure N."/>
            <person name="Zhou C."/>
            <person name="Villen J."/>
            <person name="Beausoleil S.A."/>
            <person name="Bakalarski C.E."/>
            <person name="Elledge S.J."/>
            <person name="Gygi S.P."/>
        </authorList>
    </citation>
    <scope>PHOSPHORYLATION [LARGE SCALE ANALYSIS] AT SER-215; SER-219; SER-232; SER-240 AND SER-288</scope>
    <scope>IDENTIFICATION BY MASS SPECTROMETRY [LARGE SCALE ANALYSIS]</scope>
    <source>
        <tissue>Cervix carcinoma</tissue>
    </source>
</reference>
<reference key="10">
    <citation type="journal article" date="2009" name="Anal. Chem.">
        <title>Lys-N and trypsin cover complementary parts of the phosphoproteome in a refined SCX-based approach.</title>
        <authorList>
            <person name="Gauci S."/>
            <person name="Helbig A.O."/>
            <person name="Slijper M."/>
            <person name="Krijgsveld J."/>
            <person name="Heck A.J."/>
            <person name="Mohammed S."/>
        </authorList>
    </citation>
    <scope>IDENTIFICATION BY MASS SPECTROMETRY [LARGE SCALE ANALYSIS]</scope>
</reference>
<reference key="11">
    <citation type="journal article" date="2010" name="Sci. Signal.">
        <title>Quantitative phosphoproteomics reveals widespread full phosphorylation site occupancy during mitosis.</title>
        <authorList>
            <person name="Olsen J.V."/>
            <person name="Vermeulen M."/>
            <person name="Santamaria A."/>
            <person name="Kumar C."/>
            <person name="Miller M.L."/>
            <person name="Jensen L.J."/>
            <person name="Gnad F."/>
            <person name="Cox J."/>
            <person name="Jensen T.S."/>
            <person name="Nigg E.A."/>
            <person name="Brunak S."/>
            <person name="Mann M."/>
        </authorList>
    </citation>
    <scope>PHOSPHORYLATION [LARGE SCALE ANALYSIS] AT SER-232 AND SER-240</scope>
    <scope>IDENTIFICATION BY MASS SPECTROMETRY [LARGE SCALE ANALYSIS]</scope>
    <source>
        <tissue>Cervix carcinoma</tissue>
    </source>
</reference>
<reference key="12">
    <citation type="journal article" date="2011" name="Sci. Signal.">
        <title>System-wide temporal characterization of the proteome and phosphoproteome of human embryonic stem cell differentiation.</title>
        <authorList>
            <person name="Rigbolt K.T."/>
            <person name="Prokhorova T.A."/>
            <person name="Akimov V."/>
            <person name="Henningsen J."/>
            <person name="Johansen P.T."/>
            <person name="Kratchmarova I."/>
            <person name="Kassem M."/>
            <person name="Mann M."/>
            <person name="Olsen J.V."/>
            <person name="Blagoev B."/>
        </authorList>
    </citation>
    <scope>PHOSPHORYLATION [LARGE SCALE ANALYSIS] AT SER-240</scope>
    <scope>IDENTIFICATION BY MASS SPECTROMETRY [LARGE SCALE ANALYSIS]</scope>
</reference>
<reference key="13">
    <citation type="journal article" date="2013" name="J. Proteome Res.">
        <title>Toward a comprehensive characterization of a human cancer cell phosphoproteome.</title>
        <authorList>
            <person name="Zhou H."/>
            <person name="Di Palma S."/>
            <person name="Preisinger C."/>
            <person name="Peng M."/>
            <person name="Polat A.N."/>
            <person name="Heck A.J."/>
            <person name="Mohammed S."/>
        </authorList>
    </citation>
    <scope>PHOSPHORYLATION [LARGE SCALE ANALYSIS] AT SER-215; SER-219; SER-232; SER-240 AND SER-288</scope>
    <scope>IDENTIFICATION BY MASS SPECTROMETRY [LARGE SCALE ANALYSIS]</scope>
    <source>
        <tissue>Cervix carcinoma</tissue>
    </source>
</reference>
<reference key="14">
    <citation type="journal article" date="2013" name="Mol. Cell. Biol.">
        <title>Phosphorylation regulates FOXC2-mediated transcription in lymphatic endothelial cells.</title>
        <authorList>
            <person name="Ivanov K.I."/>
            <person name="Agalarov Y."/>
            <person name="Valmu L."/>
            <person name="Samuilova O."/>
            <person name="Liebl J."/>
            <person name="Houhou N."/>
            <person name="Maby-El Hajjami H."/>
            <person name="Norrmen C."/>
            <person name="Jaquet M."/>
            <person name="Miura N."/>
            <person name="Zangger N."/>
            <person name="Yla-Herttuala S."/>
            <person name="Delorenzi M."/>
            <person name="Petrova T.V."/>
        </authorList>
    </citation>
    <scope>SUBCELLULAR LOCATION</scope>
    <scope>PHOSPHORYLATION AT SER-219; SER-232; SER-240; THR-247; SER-251; SER-281; SER-288 AND SER-367</scope>
    <scope>IDENTIFICATION BY MASS SPECTROMETRY</scope>
</reference>
<reference key="15">
    <citation type="journal article" date="2014" name="Nat. Struct. Mol. Biol.">
        <title>Uncovering global SUMOylation signaling networks in a site-specific manner.</title>
        <authorList>
            <person name="Hendriks I.A."/>
            <person name="D'Souza R.C."/>
            <person name="Yang B."/>
            <person name="Verlaan-de Vries M."/>
            <person name="Mann M."/>
            <person name="Vertegaal A.C."/>
        </authorList>
    </citation>
    <scope>SUMOYLATION [LARGE SCALE ANALYSIS] AT LYS-214</scope>
    <scope>IDENTIFICATION BY MASS SPECTROMETRY [LARGE SCALE ANALYSIS]</scope>
</reference>
<reference key="16">
    <citation type="journal article" date="2017" name="Circ. Res.">
        <title>Polydom Is an Extracellular Matrix Protein Involved in Lymphatic Vessel Remodeling.</title>
        <authorList>
            <person name="Morooka N."/>
            <person name="Futaki S."/>
            <person name="Sato-Nishiuchi R."/>
            <person name="Nishino M."/>
            <person name="Totani Y."/>
            <person name="Shimono C."/>
            <person name="Nakano I."/>
            <person name="Nakajima H."/>
            <person name="Mochizuki N."/>
            <person name="Sekiguchi K."/>
        </authorList>
    </citation>
    <scope>SUBCELLULAR LOCATION</scope>
</reference>
<reference key="17">
    <citation type="journal article" date="2017" name="Nat. Struct. Mol. Biol.">
        <title>Site-specific mapping of the human SUMO proteome reveals co-modification with phosphorylation.</title>
        <authorList>
            <person name="Hendriks I.A."/>
            <person name="Lyon D."/>
            <person name="Young C."/>
            <person name="Jensen L.J."/>
            <person name="Vertegaal A.C."/>
            <person name="Nielsen M.L."/>
        </authorList>
    </citation>
    <scope>SUMOYLATION [LARGE SCALE ANALYSIS] AT LYS-184 AND LYS-214</scope>
    <scope>IDENTIFICATION BY MASS SPECTROMETRY [LARGE SCALE ANALYSIS]</scope>
</reference>
<reference key="18">
    <citation type="journal article" date="2000" name="J. Mol. Biol.">
        <title>Solution structure and dynamics of the DNA-binding domain of the adipocyte-transcription factor FREAC-11.</title>
        <authorList>
            <person name="van Dongen M.J."/>
            <person name="Cederberg A."/>
            <person name="Carlsson P."/>
            <person name="Enerback S."/>
            <person name="Wikstrom M."/>
        </authorList>
    </citation>
    <scope>STRUCTURE BY NMR OF 70-162</scope>
</reference>
<reference key="19">
    <citation type="journal article" date="2001" name="Hum. Genet.">
        <title>Analysis of lymphoedema-distichiasis families for FOXC2 mutations reveals small insertions and deletions throughout the gene.</title>
        <authorList>
            <person name="Bell R."/>
            <person name="Brice G."/>
            <person name="Child A.H."/>
            <person name="Murday V.A."/>
            <person name="Mansour S."/>
            <person name="Sandy C.J."/>
            <person name="Collin J.R.O."/>
            <person name="Brady A.F."/>
            <person name="Callen D.F."/>
            <person name="Burnand K."/>
            <person name="Mortimer P."/>
            <person name="Jeffery S."/>
        </authorList>
    </citation>
    <scope>VARIANT LPHDST LEU-125</scope>
</reference>
<name>FOXC2_HUMAN</name>
<protein>
    <recommendedName>
        <fullName>Forkhead box protein C2</fullName>
    </recommendedName>
    <alternativeName>
        <fullName>Forkhead-related protein FKHL14</fullName>
    </alternativeName>
    <alternativeName>
        <fullName>Mesenchyme fork head protein 1</fullName>
        <shortName>MFH-1 protein</shortName>
    </alternativeName>
    <alternativeName>
        <fullName>Transcription factor FKH-14</fullName>
    </alternativeName>
</protein>
<sequence>MQARYSVSDPNALGVVPYLSEQNYYRAAGSYGGMASPMGVYSGHPEQYSAGMGRSYAPYHHHQPAAPKDLVKPPYSYIALITMAIQNAPEKKITLNGIYQFIMDRFPFYRENKQGWQNSIRHNLSLNECFVKVPRDDKKPGKGSYWTLDPDSYNMFENGSFLRRRRRFKKKDVSKEKEERAHLKEPPPAASKGAPATPHLADAPKEAEKKVVIKSEAASPALPVITKVETLSPESALQGSPRSAASTPAGSPDGSLPEHHAAAPNGLPGFSVENIMTLRTSPPGGELSPGAGRAGLVVPPLALPYAAAPPAAYGQPCAQGLEAGAAGGYQCSMRAMSLYTGAERPAHMCVPPALDEALSDHPSGPTSPLSALNLAAGQEGALAATGHHHQHHGHHHPQAPPPPPAPQPQPTPQPGAAAAQAASWYLNHSGDLNHLPGHTFAAQQQTFPNVREMFNSHRLGIENSTLGESQVSGNASCQLPYRSTPPLYRHAAPYSYDCTKY</sequence>
<comment type="function">
    <text evidence="9">Transcriptional activator.</text>
</comment>
<comment type="interaction">
    <interactant intactId="EBI-3956892">
        <id>Q99958</id>
    </interactant>
    <interactant intactId="EBI-3956892">
        <id>Q99958</id>
        <label>FOXC2</label>
    </interactant>
    <organismsDiffer>false</organismsDiffer>
    <experiments>2</experiments>
</comment>
<comment type="interaction">
    <interactant intactId="EBI-3956892">
        <id>Q99958</id>
    </interactant>
    <interactant intactId="EBI-618309">
        <id>Q08379</id>
        <label>GOLGA2</label>
    </interactant>
    <organismsDiffer>false</organismsDiffer>
    <experiments>3</experiments>
</comment>
<comment type="interaction">
    <interactant intactId="EBI-3956892">
        <id>Q99958</id>
    </interactant>
    <interactant intactId="EBI-3957694">
        <id>Q9BYR6</id>
        <label>KRTAP3-3</label>
    </interactant>
    <organismsDiffer>false</organismsDiffer>
    <experiments>3</experiments>
</comment>
<comment type="interaction">
    <interactant intactId="EBI-3956892">
        <id>Q99958</id>
    </interactant>
    <interactant intactId="EBI-8487781">
        <id>Q8N6F8</id>
        <label>METTL27</label>
    </interactant>
    <organismsDiffer>false</organismsDiffer>
    <experiments>3</experiments>
</comment>
<comment type="interaction">
    <interactant intactId="EBI-3956892">
        <id>Q99958</id>
    </interactant>
    <interactant intactId="EBI-740322">
        <id>Q93062</id>
        <label>RBPMS</label>
    </interactant>
    <organismsDiffer>false</organismsDiffer>
    <experiments>3</experiments>
</comment>
<comment type="interaction">
    <interactant intactId="EBI-3956892">
        <id>Q99958</id>
    </interactant>
    <interactant intactId="EBI-529518">
        <id>Q86VP1</id>
        <label>TAX1BP1</label>
    </interactant>
    <organismsDiffer>false</organismsDiffer>
    <experiments>3</experiments>
</comment>
<comment type="interaction">
    <interactant intactId="EBI-3956892">
        <id>Q99958</id>
    </interactant>
    <interactant intactId="EBI-719493">
        <id>P14373</id>
        <label>TRIM27</label>
    </interactant>
    <organismsDiffer>false</organismsDiffer>
    <experiments>3</experiments>
</comment>
<comment type="interaction">
    <interactant intactId="EBI-3956892">
        <id>Q99958</id>
    </interactant>
    <interactant intactId="EBI-10295632">
        <id>Q96IQ6</id>
    </interactant>
    <organismsDiffer>false</organismsDiffer>
    <experiments>3</experiments>
</comment>
<comment type="subcellular location">
    <subcellularLocation>
        <location evidence="2 7 8">Nucleus</location>
    </subcellularLocation>
</comment>
<comment type="PTM">
    <text evidence="7">Phosphorylation regulates FOXC2 transcriptional activity by promoting its recruitment to chromatin.</text>
</comment>
<comment type="disease" evidence="4 5 6">
    <disease id="DI-00690">
        <name>Lymphedema-distichiasis syndrome</name>
        <acronym>LPHDST</acronym>
        <description>An autosomal dominant disorder characterized by primary limb lymphedema associated with distichiasis (double rows of eyelashes, with extra eyelashes growing from the Meibomian gland orifices). Swelling of the extremities, due to altered lymphatic flow, usually appears in late childhood or puberty. Most affected individuals have ocular findings including corneal irritation, recurrent conjunctivitis, and photophobia. Drooping of the upper eyelid (ptosis) is a variable feature of the lymphedema-distichiasis syndrome, occurring in about 30% of patients.</description>
        <dbReference type="MIM" id="153400"/>
    </disease>
    <text>The disease is caused by variants affecting the gene represented in this entry.</text>
</comment>
<gene>
    <name type="primary">FOXC2</name>
    <name type="synonym">FKHL14</name>
    <name type="synonym">MFH1</name>
</gene>
<accession>Q99958</accession>
<accession>C6KMR9</accession>
<accession>Q14DA6</accession>
<dbReference type="EMBL" id="Y08223">
    <property type="protein sequence ID" value="CAA69400.1"/>
    <property type="molecule type" value="Genomic_DNA"/>
</dbReference>
<dbReference type="EMBL" id="GQ282998">
    <property type="protein sequence ID" value="ACS83751.1"/>
    <property type="molecule type" value="Genomic_DNA"/>
</dbReference>
<dbReference type="EMBL" id="BC113437">
    <property type="protein sequence ID" value="AAI13438.1"/>
    <property type="molecule type" value="mRNA"/>
</dbReference>
<dbReference type="EMBL" id="BC113439">
    <property type="protein sequence ID" value="AAI13440.1"/>
    <property type="molecule type" value="mRNA"/>
</dbReference>
<dbReference type="CCDS" id="CCDS10958.1"/>
<dbReference type="RefSeq" id="NP_005242.1">
    <property type="nucleotide sequence ID" value="NM_005251.3"/>
</dbReference>
<dbReference type="PDB" id="1D5V">
    <property type="method" value="NMR"/>
    <property type="chains" value="A=70-162"/>
</dbReference>
<dbReference type="PDB" id="6AKO">
    <property type="method" value="X-ray"/>
    <property type="resolution" value="2.40 A"/>
    <property type="chains" value="C=72-172"/>
</dbReference>
<dbReference type="PDB" id="6AKP">
    <property type="method" value="X-ray"/>
    <property type="resolution" value="2.32 A"/>
    <property type="chains" value="C=72-172"/>
</dbReference>
<dbReference type="PDB" id="6LBM">
    <property type="method" value="X-ray"/>
    <property type="resolution" value="2.84 A"/>
    <property type="chains" value="C=72-172"/>
</dbReference>
<dbReference type="PDB" id="6O3T">
    <property type="method" value="X-ray"/>
    <property type="resolution" value="3.06 A"/>
    <property type="chains" value="A/B=70-164"/>
</dbReference>
<dbReference type="PDBsum" id="1D5V"/>
<dbReference type="PDBsum" id="6AKO"/>
<dbReference type="PDBsum" id="6AKP"/>
<dbReference type="PDBsum" id="6LBM"/>
<dbReference type="PDBsum" id="6O3T"/>
<dbReference type="SMR" id="Q99958"/>
<dbReference type="BioGRID" id="108592">
    <property type="interactions" value="42"/>
</dbReference>
<dbReference type="FunCoup" id="Q99958">
    <property type="interactions" value="945"/>
</dbReference>
<dbReference type="IntAct" id="Q99958">
    <property type="interactions" value="38"/>
</dbReference>
<dbReference type="MINT" id="Q99958"/>
<dbReference type="STRING" id="9606.ENSP00000497759"/>
<dbReference type="ChEMBL" id="CHEMBL5465348"/>
<dbReference type="GlyGen" id="Q99958">
    <property type="glycosylation" value="3 sites"/>
</dbReference>
<dbReference type="iPTMnet" id="Q99958"/>
<dbReference type="PhosphoSitePlus" id="Q99958"/>
<dbReference type="BioMuta" id="FOXC2"/>
<dbReference type="DMDM" id="3024149"/>
<dbReference type="jPOST" id="Q99958"/>
<dbReference type="MassIVE" id="Q99958"/>
<dbReference type="PaxDb" id="9606-ENSP00000326371"/>
<dbReference type="PeptideAtlas" id="Q99958"/>
<dbReference type="ProteomicsDB" id="78542"/>
<dbReference type="Pumba" id="Q99958"/>
<dbReference type="Antibodypedia" id="17195">
    <property type="antibodies" value="564 antibodies from 35 providers"/>
</dbReference>
<dbReference type="CPTC" id="Q99958">
    <property type="antibodies" value="1 antibody"/>
</dbReference>
<dbReference type="DNASU" id="2303"/>
<dbReference type="Ensembl" id="ENST00000649859.1">
    <property type="protein sequence ID" value="ENSP00000497759.1"/>
    <property type="gene ID" value="ENSG00000176692.8"/>
</dbReference>
<dbReference type="GeneID" id="2303"/>
<dbReference type="KEGG" id="hsa:2303"/>
<dbReference type="MANE-Select" id="ENST00000649859.1">
    <property type="protein sequence ID" value="ENSP00000497759.1"/>
    <property type="RefSeq nucleotide sequence ID" value="NM_005251.3"/>
    <property type="RefSeq protein sequence ID" value="NP_005242.1"/>
</dbReference>
<dbReference type="UCSC" id="uc002fjq.4">
    <property type="organism name" value="human"/>
</dbReference>
<dbReference type="AGR" id="HGNC:3801"/>
<dbReference type="CTD" id="2303"/>
<dbReference type="DisGeNET" id="2303"/>
<dbReference type="GeneCards" id="FOXC2"/>
<dbReference type="GeneReviews" id="FOXC2"/>
<dbReference type="HGNC" id="HGNC:3801">
    <property type="gene designation" value="FOXC2"/>
</dbReference>
<dbReference type="HPA" id="ENSG00000176692">
    <property type="expression patterns" value="Tissue enhanced (heart muscle, kidney)"/>
</dbReference>
<dbReference type="MalaCards" id="FOXC2"/>
<dbReference type="MIM" id="153400">
    <property type="type" value="phenotype"/>
</dbReference>
<dbReference type="MIM" id="602402">
    <property type="type" value="gene"/>
</dbReference>
<dbReference type="neXtProt" id="NX_Q99958"/>
<dbReference type="OpenTargets" id="ENSG00000176692"/>
<dbReference type="Orphanet" id="33001">
    <property type="disease" value="Lymphedema-distichiasis syndrome"/>
</dbReference>
<dbReference type="PharmGKB" id="PA28218"/>
<dbReference type="VEuPathDB" id="HostDB:ENSG00000176692"/>
<dbReference type="eggNOG" id="KOG2294">
    <property type="taxonomic scope" value="Eukaryota"/>
</dbReference>
<dbReference type="GeneTree" id="ENSGT00940000162619"/>
<dbReference type="HOGENOM" id="CLU_035722_3_1_1"/>
<dbReference type="InParanoid" id="Q99958"/>
<dbReference type="OMA" id="REMFTSH"/>
<dbReference type="OrthoDB" id="5954824at2759"/>
<dbReference type="PAN-GO" id="Q99958">
    <property type="GO annotations" value="5 GO annotations based on evolutionary models"/>
</dbReference>
<dbReference type="PhylomeDB" id="Q99958"/>
<dbReference type="TreeFam" id="TF316127"/>
<dbReference type="PathwayCommons" id="Q99958"/>
<dbReference type="Reactome" id="R-HSA-9761174">
    <property type="pathway name" value="Formation of intermediate mesoderm"/>
</dbReference>
<dbReference type="Reactome" id="R-HSA-9830674">
    <property type="pathway name" value="Formation of the ureteric bud"/>
</dbReference>
<dbReference type="SignaLink" id="Q99958"/>
<dbReference type="SIGNOR" id="Q99958"/>
<dbReference type="BioGRID-ORCS" id="2303">
    <property type="hits" value="41 hits in 1172 CRISPR screens"/>
</dbReference>
<dbReference type="EvolutionaryTrace" id="Q99958"/>
<dbReference type="GeneWiki" id="FOXC2"/>
<dbReference type="GenomeRNAi" id="2303"/>
<dbReference type="Pharos" id="Q99958">
    <property type="development level" value="Tbio"/>
</dbReference>
<dbReference type="PRO" id="PR:Q99958"/>
<dbReference type="Proteomes" id="UP000005640">
    <property type="component" value="Chromosome 16"/>
</dbReference>
<dbReference type="RNAct" id="Q99958">
    <property type="molecule type" value="protein"/>
</dbReference>
<dbReference type="Bgee" id="ENSG00000176692">
    <property type="expression patterns" value="Expressed in vena cava and 137 other cell types or tissues"/>
</dbReference>
<dbReference type="GO" id="GO:0000785">
    <property type="term" value="C:chromatin"/>
    <property type="evidence" value="ECO:0000247"/>
    <property type="project" value="NTNU_SB"/>
</dbReference>
<dbReference type="GO" id="GO:0016604">
    <property type="term" value="C:nuclear body"/>
    <property type="evidence" value="ECO:0000314"/>
    <property type="project" value="HPA"/>
</dbReference>
<dbReference type="GO" id="GO:0005654">
    <property type="term" value="C:nucleoplasm"/>
    <property type="evidence" value="ECO:0000314"/>
    <property type="project" value="HPA"/>
</dbReference>
<dbReference type="GO" id="GO:0005634">
    <property type="term" value="C:nucleus"/>
    <property type="evidence" value="ECO:0000314"/>
    <property type="project" value="UniProtKB"/>
</dbReference>
<dbReference type="GO" id="GO:0031490">
    <property type="term" value="F:chromatin DNA binding"/>
    <property type="evidence" value="ECO:0000314"/>
    <property type="project" value="UniProtKB"/>
</dbReference>
<dbReference type="GO" id="GO:0001216">
    <property type="term" value="F:DNA-binding transcription activator activity"/>
    <property type="evidence" value="ECO:0000314"/>
    <property type="project" value="UniProtKB"/>
</dbReference>
<dbReference type="GO" id="GO:0001228">
    <property type="term" value="F:DNA-binding transcription activator activity, RNA polymerase II-specific"/>
    <property type="evidence" value="ECO:0000314"/>
    <property type="project" value="BHF-UCL"/>
</dbReference>
<dbReference type="GO" id="GO:0000981">
    <property type="term" value="F:DNA-binding transcription factor activity, RNA polymerase II-specific"/>
    <property type="evidence" value="ECO:0000247"/>
    <property type="project" value="NTNU_SB"/>
</dbReference>
<dbReference type="GO" id="GO:0042802">
    <property type="term" value="F:identical protein binding"/>
    <property type="evidence" value="ECO:0000353"/>
    <property type="project" value="IntAct"/>
</dbReference>
<dbReference type="GO" id="GO:1990841">
    <property type="term" value="F:promoter-specific chromatin binding"/>
    <property type="evidence" value="ECO:0000250"/>
    <property type="project" value="UniProtKB"/>
</dbReference>
<dbReference type="GO" id="GO:0000978">
    <property type="term" value="F:RNA polymerase II cis-regulatory region sequence-specific DNA binding"/>
    <property type="evidence" value="ECO:0000314"/>
    <property type="project" value="BHF-UCL"/>
</dbReference>
<dbReference type="GO" id="GO:0000977">
    <property type="term" value="F:RNA polymerase II transcription regulatory region sequence-specific DNA binding"/>
    <property type="evidence" value="ECO:0000314"/>
    <property type="project" value="BHF-UCL"/>
</dbReference>
<dbReference type="GO" id="GO:0043565">
    <property type="term" value="F:sequence-specific DNA binding"/>
    <property type="evidence" value="ECO:0000314"/>
    <property type="project" value="UniProtKB"/>
</dbReference>
<dbReference type="GO" id="GO:1990837">
    <property type="term" value="F:sequence-specific double-stranded DNA binding"/>
    <property type="evidence" value="ECO:0000314"/>
    <property type="project" value="ARUK-UCL"/>
</dbReference>
<dbReference type="GO" id="GO:0000976">
    <property type="term" value="F:transcription cis-regulatory region binding"/>
    <property type="evidence" value="ECO:0000250"/>
    <property type="project" value="BHF-UCL"/>
</dbReference>
<dbReference type="GO" id="GO:0009653">
    <property type="term" value="P:anatomical structure morphogenesis"/>
    <property type="evidence" value="ECO:0000318"/>
    <property type="project" value="GO_Central"/>
</dbReference>
<dbReference type="GO" id="GO:0003275">
    <property type="term" value="P:apoptotic process involved in outflow tract morphogenesis"/>
    <property type="evidence" value="ECO:0007669"/>
    <property type="project" value="Ensembl"/>
</dbReference>
<dbReference type="GO" id="GO:0048844">
    <property type="term" value="P:artery morphogenesis"/>
    <property type="evidence" value="ECO:0007669"/>
    <property type="project" value="Ensembl"/>
</dbReference>
<dbReference type="GO" id="GO:0097746">
    <property type="term" value="P:blood vessel diameter maintenance"/>
    <property type="evidence" value="ECO:0007669"/>
    <property type="project" value="Ensembl"/>
</dbReference>
<dbReference type="GO" id="GO:0001974">
    <property type="term" value="P:blood vessel remodeling"/>
    <property type="evidence" value="ECO:0007669"/>
    <property type="project" value="Ensembl"/>
</dbReference>
<dbReference type="GO" id="GO:0001569">
    <property type="term" value="P:branching involved in blood vessel morphogenesis"/>
    <property type="evidence" value="ECO:0007669"/>
    <property type="project" value="Ensembl"/>
</dbReference>
<dbReference type="GO" id="GO:0043010">
    <property type="term" value="P:camera-type eye development"/>
    <property type="evidence" value="ECO:0007669"/>
    <property type="project" value="Ensembl"/>
</dbReference>
<dbReference type="GO" id="GO:0060038">
    <property type="term" value="P:cardiac muscle cell proliferation"/>
    <property type="evidence" value="ECO:0007669"/>
    <property type="project" value="Ensembl"/>
</dbReference>
<dbReference type="GO" id="GO:0030154">
    <property type="term" value="P:cell differentiation"/>
    <property type="evidence" value="ECO:0000318"/>
    <property type="project" value="GO_Central"/>
</dbReference>
<dbReference type="GO" id="GO:0030199">
    <property type="term" value="P:collagen fibril organization"/>
    <property type="evidence" value="ECO:0007669"/>
    <property type="project" value="Ensembl"/>
</dbReference>
<dbReference type="GO" id="GO:0035050">
    <property type="term" value="P:embryonic heart tube development"/>
    <property type="evidence" value="ECO:0007669"/>
    <property type="project" value="Ensembl"/>
</dbReference>
<dbReference type="GO" id="GO:0048703">
    <property type="term" value="P:embryonic viscerocranium morphogenesis"/>
    <property type="evidence" value="ECO:0007669"/>
    <property type="project" value="Ensembl"/>
</dbReference>
<dbReference type="GO" id="GO:0072011">
    <property type="term" value="P:glomerular endothelium development"/>
    <property type="evidence" value="ECO:0007669"/>
    <property type="project" value="Ensembl"/>
</dbReference>
<dbReference type="GO" id="GO:0072144">
    <property type="term" value="P:glomerular mesangial cell development"/>
    <property type="evidence" value="ECO:0007669"/>
    <property type="project" value="Ensembl"/>
</dbReference>
<dbReference type="GO" id="GO:0007507">
    <property type="term" value="P:heart development"/>
    <property type="evidence" value="ECO:0000315"/>
    <property type="project" value="DFLAT"/>
</dbReference>
<dbReference type="GO" id="GO:0008286">
    <property type="term" value="P:insulin receptor signaling pathway"/>
    <property type="evidence" value="ECO:0000314"/>
    <property type="project" value="UniProtKB"/>
</dbReference>
<dbReference type="GO" id="GO:0001946">
    <property type="term" value="P:lymphangiogenesis"/>
    <property type="evidence" value="ECO:0000315"/>
    <property type="project" value="UniProtKB"/>
</dbReference>
<dbReference type="GO" id="GO:0007498">
    <property type="term" value="P:mesoderm development"/>
    <property type="evidence" value="ECO:0000303"/>
    <property type="project" value="UniProtKB"/>
</dbReference>
<dbReference type="GO" id="GO:0001656">
    <property type="term" value="P:metanephros development"/>
    <property type="evidence" value="ECO:0007669"/>
    <property type="project" value="Ensembl"/>
</dbReference>
<dbReference type="GO" id="GO:1902257">
    <property type="term" value="P:negative regulation of apoptotic process involved in outflow tract morphogenesis"/>
    <property type="evidence" value="ECO:0007669"/>
    <property type="project" value="Ensembl"/>
</dbReference>
<dbReference type="GO" id="GO:0120163">
    <property type="term" value="P:negative regulation of cold-induced thermogenesis"/>
    <property type="evidence" value="ECO:0000315"/>
    <property type="project" value="YuBioLab"/>
</dbReference>
<dbReference type="GO" id="GO:0000122">
    <property type="term" value="P:negative regulation of transcription by RNA polymerase II"/>
    <property type="evidence" value="ECO:0000250"/>
    <property type="project" value="BHF-UCL"/>
</dbReference>
<dbReference type="GO" id="GO:0014032">
    <property type="term" value="P:neural crest cell development"/>
    <property type="evidence" value="ECO:0007669"/>
    <property type="project" value="Ensembl"/>
</dbReference>
<dbReference type="GO" id="GO:0007219">
    <property type="term" value="P:Notch signaling pathway"/>
    <property type="evidence" value="ECO:0007669"/>
    <property type="project" value="Ensembl"/>
</dbReference>
<dbReference type="GO" id="GO:0001503">
    <property type="term" value="P:ossification"/>
    <property type="evidence" value="ECO:0007669"/>
    <property type="project" value="Ensembl"/>
</dbReference>
<dbReference type="GO" id="GO:0048343">
    <property type="term" value="P:paraxial mesodermal cell fate commitment"/>
    <property type="evidence" value="ECO:0007669"/>
    <property type="project" value="Ensembl"/>
</dbReference>
<dbReference type="GO" id="GO:0072112">
    <property type="term" value="P:podocyte differentiation"/>
    <property type="evidence" value="ECO:0007669"/>
    <property type="project" value="Ensembl"/>
</dbReference>
<dbReference type="GO" id="GO:0033630">
    <property type="term" value="P:positive regulation of cell adhesion mediated by integrin"/>
    <property type="evidence" value="ECO:0000250"/>
    <property type="project" value="BHF-UCL"/>
</dbReference>
<dbReference type="GO" id="GO:0090050">
    <property type="term" value="P:positive regulation of cell migration involved in sprouting angiogenesis"/>
    <property type="evidence" value="ECO:0000250"/>
    <property type="project" value="BHF-UCL"/>
</dbReference>
<dbReference type="GO" id="GO:0045893">
    <property type="term" value="P:positive regulation of DNA-templated transcription"/>
    <property type="evidence" value="ECO:0000314"/>
    <property type="project" value="UniProtKB"/>
</dbReference>
<dbReference type="GO" id="GO:0010595">
    <property type="term" value="P:positive regulation of endothelial cell migration"/>
    <property type="evidence" value="ECO:0000250"/>
    <property type="project" value="BHF-UCL"/>
</dbReference>
<dbReference type="GO" id="GO:0045944">
    <property type="term" value="P:positive regulation of transcription by RNA polymerase II"/>
    <property type="evidence" value="ECO:0000314"/>
    <property type="project" value="BHF-UCL"/>
</dbReference>
<dbReference type="GO" id="GO:0035470">
    <property type="term" value="P:positive regulation of vascular wound healing"/>
    <property type="evidence" value="ECO:0000250"/>
    <property type="project" value="BHF-UCL"/>
</dbReference>
<dbReference type="GO" id="GO:0046620">
    <property type="term" value="P:regulation of organ growth"/>
    <property type="evidence" value="ECO:0007669"/>
    <property type="project" value="Ensembl"/>
</dbReference>
<dbReference type="GO" id="GO:0006357">
    <property type="term" value="P:regulation of transcription by RNA polymerase II"/>
    <property type="evidence" value="ECO:0000318"/>
    <property type="project" value="GO_Central"/>
</dbReference>
<dbReference type="GO" id="GO:0009725">
    <property type="term" value="P:response to hormone"/>
    <property type="evidence" value="ECO:0000314"/>
    <property type="project" value="UniProtKB"/>
</dbReference>
<dbReference type="GO" id="GO:0001756">
    <property type="term" value="P:somitogenesis"/>
    <property type="evidence" value="ECO:0007669"/>
    <property type="project" value="Ensembl"/>
</dbReference>
<dbReference type="GO" id="GO:0001657">
    <property type="term" value="P:ureteric bud development"/>
    <property type="evidence" value="ECO:0007669"/>
    <property type="project" value="Ensembl"/>
</dbReference>
<dbReference type="GO" id="GO:0048010">
    <property type="term" value="P:vascular endothelial growth factor receptor signaling pathway"/>
    <property type="evidence" value="ECO:0007669"/>
    <property type="project" value="Ensembl"/>
</dbReference>
<dbReference type="GO" id="GO:0055010">
    <property type="term" value="P:ventricular cardiac muscle tissue morphogenesis"/>
    <property type="evidence" value="ECO:0007669"/>
    <property type="project" value="Ensembl"/>
</dbReference>
<dbReference type="CDD" id="cd20044">
    <property type="entry name" value="FH_FOXC1"/>
    <property type="match status" value="1"/>
</dbReference>
<dbReference type="DisProt" id="DP02231"/>
<dbReference type="FunFam" id="1.10.10.10:FF:000016">
    <property type="entry name" value="Forkhead box protein I1"/>
    <property type="match status" value="1"/>
</dbReference>
<dbReference type="Gene3D" id="1.10.10.10">
    <property type="entry name" value="Winged helix-like DNA-binding domain superfamily/Winged helix DNA-binding domain"/>
    <property type="match status" value="1"/>
</dbReference>
<dbReference type="InterPro" id="IPR001766">
    <property type="entry name" value="Fork_head_dom"/>
</dbReference>
<dbReference type="InterPro" id="IPR050211">
    <property type="entry name" value="FOX_domain-containing"/>
</dbReference>
<dbReference type="InterPro" id="IPR047391">
    <property type="entry name" value="FOXC1/C2-like_FH"/>
</dbReference>
<dbReference type="InterPro" id="IPR018122">
    <property type="entry name" value="TF_fork_head_CS_1"/>
</dbReference>
<dbReference type="InterPro" id="IPR030456">
    <property type="entry name" value="TF_fork_head_CS_2"/>
</dbReference>
<dbReference type="InterPro" id="IPR036388">
    <property type="entry name" value="WH-like_DNA-bd_sf"/>
</dbReference>
<dbReference type="InterPro" id="IPR036390">
    <property type="entry name" value="WH_DNA-bd_sf"/>
</dbReference>
<dbReference type="PANTHER" id="PTHR11829">
    <property type="entry name" value="FORKHEAD BOX PROTEIN"/>
    <property type="match status" value="1"/>
</dbReference>
<dbReference type="PANTHER" id="PTHR11829:SF189">
    <property type="entry name" value="FORKHEAD BOX PROTEIN C2"/>
    <property type="match status" value="1"/>
</dbReference>
<dbReference type="Pfam" id="PF00250">
    <property type="entry name" value="Forkhead"/>
    <property type="match status" value="1"/>
</dbReference>
<dbReference type="PRINTS" id="PR00053">
    <property type="entry name" value="FORKHEAD"/>
</dbReference>
<dbReference type="SMART" id="SM00339">
    <property type="entry name" value="FH"/>
    <property type="match status" value="1"/>
</dbReference>
<dbReference type="SUPFAM" id="SSF46785">
    <property type="entry name" value="Winged helix' DNA-binding domain"/>
    <property type="match status" value="1"/>
</dbReference>
<dbReference type="PROSITE" id="PS00657">
    <property type="entry name" value="FORK_HEAD_1"/>
    <property type="match status" value="1"/>
</dbReference>
<dbReference type="PROSITE" id="PS00658">
    <property type="entry name" value="FORK_HEAD_2"/>
    <property type="match status" value="1"/>
</dbReference>
<dbReference type="PROSITE" id="PS50039">
    <property type="entry name" value="FORK_HEAD_3"/>
    <property type="match status" value="1"/>
</dbReference>
<evidence type="ECO:0000250" key="1">
    <source>
        <dbReference type="UniProtKB" id="Q61850"/>
    </source>
</evidence>
<evidence type="ECO:0000255" key="2">
    <source>
        <dbReference type="PROSITE-ProRule" id="PRU00089"/>
    </source>
</evidence>
<evidence type="ECO:0000256" key="3">
    <source>
        <dbReference type="SAM" id="MobiDB-lite"/>
    </source>
</evidence>
<evidence type="ECO:0000269" key="4">
    <source>
    </source>
</evidence>
<evidence type="ECO:0000269" key="5">
    <source>
    </source>
</evidence>
<evidence type="ECO:0000269" key="6">
    <source>
    </source>
</evidence>
<evidence type="ECO:0000269" key="7">
    <source>
    </source>
</evidence>
<evidence type="ECO:0000269" key="8">
    <source>
    </source>
</evidence>
<evidence type="ECO:0000269" key="9">
    <source>
    </source>
</evidence>
<evidence type="ECO:0000269" key="10">
    <source ref="2"/>
</evidence>
<evidence type="ECO:0007744" key="11">
    <source>
    </source>
</evidence>
<evidence type="ECO:0007744" key="12">
    <source>
    </source>
</evidence>
<evidence type="ECO:0007744" key="13">
    <source>
    </source>
</evidence>
<evidence type="ECO:0007744" key="14">
    <source>
    </source>
</evidence>
<evidence type="ECO:0007744" key="15">
    <source>
    </source>
</evidence>
<evidence type="ECO:0007744" key="16">
    <source>
    </source>
</evidence>
<evidence type="ECO:0007744" key="17">
    <source>
    </source>
</evidence>
<evidence type="ECO:0007744" key="18">
    <source>
    </source>
</evidence>
<evidence type="ECO:0007744" key="19">
    <source>
    </source>
</evidence>
<evidence type="ECO:0007829" key="20">
    <source>
        <dbReference type="PDB" id="6AKO"/>
    </source>
</evidence>
<evidence type="ECO:0007829" key="21">
    <source>
        <dbReference type="PDB" id="6AKP"/>
    </source>
</evidence>
<evidence type="ECO:0007829" key="22">
    <source>
        <dbReference type="PDB" id="6O3T"/>
    </source>
</evidence>
<organism>
    <name type="scientific">Homo sapiens</name>
    <name type="common">Human</name>
    <dbReference type="NCBI Taxonomy" id="9606"/>
    <lineage>
        <taxon>Eukaryota</taxon>
        <taxon>Metazoa</taxon>
        <taxon>Chordata</taxon>
        <taxon>Craniata</taxon>
        <taxon>Vertebrata</taxon>
        <taxon>Euteleostomi</taxon>
        <taxon>Mammalia</taxon>
        <taxon>Eutheria</taxon>
        <taxon>Euarchontoglires</taxon>
        <taxon>Primates</taxon>
        <taxon>Haplorrhini</taxon>
        <taxon>Catarrhini</taxon>
        <taxon>Hominidae</taxon>
        <taxon>Homo</taxon>
    </lineage>
</organism>